<gene>
    <name evidence="5" type="primary">POX22.3</name>
    <name evidence="6" type="synonym">PRX111</name>
    <name evidence="8" type="ordered locus">Os07g0677200</name>
    <name evidence="6" type="ordered locus">LOC_Os07g48020</name>
    <name evidence="7" type="ORF">OJ1167_G06.125</name>
</gene>
<name>PER22_ORYSJ</name>
<keyword id="KW-0106">Calcium</keyword>
<keyword id="KW-1015">Disulfide bond</keyword>
<keyword id="KW-0325">Glycoprotein</keyword>
<keyword id="KW-0349">Heme</keyword>
<keyword id="KW-0376">Hydrogen peroxide</keyword>
<keyword id="KW-0408">Iron</keyword>
<keyword id="KW-0479">Metal-binding</keyword>
<keyword id="KW-0560">Oxidoreductase</keyword>
<keyword id="KW-0575">Peroxidase</keyword>
<keyword id="KW-0873">Pyrrolidone carboxylic acid</keyword>
<keyword id="KW-1185">Reference proteome</keyword>
<keyword id="KW-0964">Secreted</keyword>
<keyword id="KW-0732">Signal</keyword>
<comment type="function">
    <text evidence="2">Removal of H(2)O(2), oxidation of toxic reductants, biosynthesis and degradation of lignin, suberization, auxin catabolism, response to environmental stresses such as wounding, pathogen attack and oxidative stress. These functions might be dependent on each isozyme/isoform in each plant tissue.</text>
</comment>
<comment type="catalytic activity">
    <reaction evidence="2">
        <text>H2O2 + AH2 = A + 2 H2O</text>
        <dbReference type="Rhea" id="RHEA:30275"/>
        <dbReference type="ChEBI" id="CHEBI:13193"/>
        <dbReference type="ChEBI" id="CHEBI:15377"/>
        <dbReference type="ChEBI" id="CHEBI:16240"/>
        <dbReference type="ChEBI" id="CHEBI:17499"/>
    </reaction>
</comment>
<comment type="cofactor">
    <cofactor evidence="2">
        <name>heme b</name>
        <dbReference type="ChEBI" id="CHEBI:60344"/>
    </cofactor>
    <text evidence="2">Binds 1 heme b (iron(II)-protoporphyrin IX) group per subunit.</text>
</comment>
<comment type="cofactor">
    <cofactor evidence="2">
        <name>Ca(2+)</name>
        <dbReference type="ChEBI" id="CHEBI:29108"/>
    </cofactor>
    <text evidence="2">Binds 2 calcium ions per subunit.</text>
</comment>
<comment type="subcellular location">
    <subcellularLocation>
        <location evidence="2">Secreted</location>
    </subcellularLocation>
</comment>
<comment type="induction">
    <text evidence="4">Induced by infection with the bacterial pathogen Xanthomonas oryzae pv oryzae, and wounding in mature leaves.</text>
</comment>
<comment type="similarity">
    <text evidence="2">Belongs to the peroxidase family. Classical plant (class III) peroxidase subfamily.</text>
</comment>
<proteinExistence type="evidence at transcript level"/>
<sequence length="317" mass="32890">MASATNSSLSLMLLVAAAMASVASAQLSATFYDTSCPNALSTIKSVITAAVNSEARMGASLLRLHFHDCFVQGCDASVLLSGQEQNAGPNVGSLRGFSVIDNAKARVEAICNQTVSCADILAVAARDSVVALGGPSWTVLLGRRDSTTASEALANTDLPAPSSSLAELIGNFSRKGLDATDMVALSGAHTIGQAQCQNFRDRIYNETNIDSAFATQRQANCPRPTGSGDSNLAPLDTTTPNAFDNAYYSNLLSNKGLLHSDQVLFNGGSADNTVRNFASNAAAFSSAFTTAMVKMGNISPLTGTQGQIRLSCSKVNS</sequence>
<evidence type="ECO:0000255" key="1"/>
<evidence type="ECO:0000255" key="2">
    <source>
        <dbReference type="PROSITE-ProRule" id="PRU00297"/>
    </source>
</evidence>
<evidence type="ECO:0000255" key="3">
    <source>
        <dbReference type="PROSITE-ProRule" id="PRU00498"/>
    </source>
</evidence>
<evidence type="ECO:0000269" key="4">
    <source>
    </source>
</evidence>
<evidence type="ECO:0000303" key="5">
    <source>
    </source>
</evidence>
<evidence type="ECO:0000305" key="6"/>
<evidence type="ECO:0000312" key="7">
    <source>
        <dbReference type="EMBL" id="BAC83103.1"/>
    </source>
</evidence>
<evidence type="ECO:0000312" key="8">
    <source>
        <dbReference type="EMBL" id="BAT03206.1"/>
    </source>
</evidence>
<protein>
    <recommendedName>
        <fullName evidence="6">Peroxidase 22.3</fullName>
        <ecNumber evidence="6">1.11.1.-</ecNumber>
    </recommendedName>
</protein>
<organism>
    <name type="scientific">Oryza sativa subsp. japonica</name>
    <name type="common">Rice</name>
    <dbReference type="NCBI Taxonomy" id="39947"/>
    <lineage>
        <taxon>Eukaryota</taxon>
        <taxon>Viridiplantae</taxon>
        <taxon>Streptophyta</taxon>
        <taxon>Embryophyta</taxon>
        <taxon>Tracheophyta</taxon>
        <taxon>Spermatophyta</taxon>
        <taxon>Magnoliopsida</taxon>
        <taxon>Liliopsida</taxon>
        <taxon>Poales</taxon>
        <taxon>Poaceae</taxon>
        <taxon>BOP clade</taxon>
        <taxon>Oryzoideae</taxon>
        <taxon>Oryzeae</taxon>
        <taxon>Oryzinae</taxon>
        <taxon>Oryza</taxon>
        <taxon>Oryza sativa</taxon>
    </lineage>
</organism>
<reference key="1">
    <citation type="journal article" date="1992" name="Plant Physiol.">
        <title>Complementary DNA cloning and sequence analysis of a pathogen-induced putative peroxidase from rice.</title>
        <authorList>
            <person name="Reimmann C."/>
            <person name="Ringli C."/>
            <person name="Dudler R."/>
        </authorList>
    </citation>
    <scope>NUCLEOTIDE SEQUENCE [MRNA]</scope>
</reference>
<reference key="2">
    <citation type="journal article" date="1997" name="Mol. Plant Microbe Interact.">
        <title>Differential induction of a peroxidase gene family during infection of rice by Xanthomonas oryzae pv. oryzae.</title>
        <authorList>
            <person name="Chittoor J.M."/>
            <person name="Leach J.E."/>
            <person name="White F.F."/>
        </authorList>
    </citation>
    <scope>NUCLEOTIDE SEQUENCE [MRNA]</scope>
    <scope>INDUCTION</scope>
    <source>
        <tissue>Leaf</tissue>
    </source>
</reference>
<reference key="3">
    <citation type="journal article" date="2005" name="Nature">
        <title>The map-based sequence of the rice genome.</title>
        <authorList>
            <consortium name="International rice genome sequencing project (IRGSP)"/>
        </authorList>
    </citation>
    <scope>NUCLEOTIDE SEQUENCE [LARGE SCALE GENOMIC DNA]</scope>
    <source>
        <strain>cv. Nipponbare</strain>
    </source>
</reference>
<reference key="4">
    <citation type="journal article" date="2008" name="Nucleic Acids Res.">
        <title>The rice annotation project database (RAP-DB): 2008 update.</title>
        <authorList>
            <consortium name="The rice annotation project (RAP)"/>
        </authorList>
    </citation>
    <scope>GENOME REANNOTATION</scope>
    <source>
        <strain>cv. Nipponbare</strain>
    </source>
</reference>
<reference key="5">
    <citation type="journal article" date="2013" name="Rice">
        <title>Improvement of the Oryza sativa Nipponbare reference genome using next generation sequence and optical map data.</title>
        <authorList>
            <person name="Kawahara Y."/>
            <person name="de la Bastide M."/>
            <person name="Hamilton J.P."/>
            <person name="Kanamori H."/>
            <person name="McCombie W.R."/>
            <person name="Ouyang S."/>
            <person name="Schwartz D.C."/>
            <person name="Tanaka T."/>
            <person name="Wu J."/>
            <person name="Zhou S."/>
            <person name="Childs K.L."/>
            <person name="Davidson R.M."/>
            <person name="Lin H."/>
            <person name="Quesada-Ocampo L."/>
            <person name="Vaillancourt B."/>
            <person name="Sakai H."/>
            <person name="Lee S.S."/>
            <person name="Kim J."/>
            <person name="Numa H."/>
            <person name="Itoh T."/>
            <person name="Buell C.R."/>
            <person name="Matsumoto T."/>
        </authorList>
    </citation>
    <scope>GENOME REANNOTATION</scope>
    <source>
        <strain>cv. Nipponbare</strain>
    </source>
</reference>
<reference key="6">
    <citation type="journal article" date="2003" name="Science">
        <title>Collection, mapping, and annotation of over 28,000 cDNA clones from japonica rice.</title>
        <authorList>
            <consortium name="The rice full-length cDNA consortium"/>
        </authorList>
    </citation>
    <scope>NUCLEOTIDE SEQUENCE [LARGE SCALE MRNA]</scope>
    <source>
        <strain>cv. Nipponbare</strain>
    </source>
</reference>
<accession>Q7F1U0</accession>
<accession>O22438</accession>
<accession>Q0D3N1</accession>
<accession>Q43006</accession>
<dbReference type="EC" id="1.11.1.-" evidence="6"/>
<dbReference type="EMBL" id="X66125">
    <property type="protein sequence ID" value="CAA46916.1"/>
    <property type="molecule type" value="mRNA"/>
</dbReference>
<dbReference type="EMBL" id="AF014467">
    <property type="protein sequence ID" value="AAC49818.1"/>
    <property type="molecule type" value="mRNA"/>
</dbReference>
<dbReference type="EMBL" id="AP003817">
    <property type="protein sequence ID" value="BAC83103.1"/>
    <property type="molecule type" value="Genomic_DNA"/>
</dbReference>
<dbReference type="EMBL" id="AP008213">
    <property type="protein sequence ID" value="BAF22542.1"/>
    <property type="molecule type" value="Genomic_DNA"/>
</dbReference>
<dbReference type="EMBL" id="AP014963">
    <property type="protein sequence ID" value="BAT03206.1"/>
    <property type="molecule type" value="Genomic_DNA"/>
</dbReference>
<dbReference type="EMBL" id="AK073202">
    <property type="protein sequence ID" value="BAG93342.1"/>
    <property type="molecule type" value="mRNA"/>
</dbReference>
<dbReference type="EMBL" id="AK104710">
    <property type="protein sequence ID" value="BAG96895.1"/>
    <property type="molecule type" value="mRNA"/>
</dbReference>
<dbReference type="PIR" id="S22087">
    <property type="entry name" value="S22087"/>
</dbReference>
<dbReference type="RefSeq" id="XP_015647952.1">
    <property type="nucleotide sequence ID" value="XM_015792466.1"/>
</dbReference>
<dbReference type="SMR" id="Q7F1U0"/>
<dbReference type="FunCoup" id="Q7F1U0">
    <property type="interactions" value="160"/>
</dbReference>
<dbReference type="STRING" id="39947.Q7F1U0"/>
<dbReference type="PeroxiBase" id="1121">
    <property type="entry name" value="OsPrx111"/>
</dbReference>
<dbReference type="GlyCosmos" id="Q7F1U0">
    <property type="glycosylation" value="3 sites, No reported glycans"/>
</dbReference>
<dbReference type="PaxDb" id="39947-Q7F1U0"/>
<dbReference type="EnsemblPlants" id="Os07t0677200-01">
    <property type="protein sequence ID" value="Os07t0677200-01"/>
    <property type="gene ID" value="Os07g0677200"/>
</dbReference>
<dbReference type="Gramene" id="Os07t0677200-01">
    <property type="protein sequence ID" value="Os07t0677200-01"/>
    <property type="gene ID" value="Os07g0677200"/>
</dbReference>
<dbReference type="KEGG" id="dosa:Os07g0677200"/>
<dbReference type="eggNOG" id="ENOG502QSXF">
    <property type="taxonomic scope" value="Eukaryota"/>
</dbReference>
<dbReference type="HOGENOM" id="CLU_010543_0_0_1"/>
<dbReference type="InParanoid" id="Q7F1U0"/>
<dbReference type="OMA" id="CFVNAND"/>
<dbReference type="Proteomes" id="UP000000763">
    <property type="component" value="Chromosome 7"/>
</dbReference>
<dbReference type="Proteomes" id="UP000059680">
    <property type="component" value="Chromosome 7"/>
</dbReference>
<dbReference type="ExpressionAtlas" id="Q7F1U0">
    <property type="expression patterns" value="baseline and differential"/>
</dbReference>
<dbReference type="GO" id="GO:0005576">
    <property type="term" value="C:extracellular region"/>
    <property type="evidence" value="ECO:0007669"/>
    <property type="project" value="UniProtKB-SubCell"/>
</dbReference>
<dbReference type="GO" id="GO:0020037">
    <property type="term" value="F:heme binding"/>
    <property type="evidence" value="ECO:0007669"/>
    <property type="project" value="InterPro"/>
</dbReference>
<dbReference type="GO" id="GO:0140825">
    <property type="term" value="F:lactoperoxidase activity"/>
    <property type="evidence" value="ECO:0007669"/>
    <property type="project" value="UniProtKB-EC"/>
</dbReference>
<dbReference type="GO" id="GO:0046872">
    <property type="term" value="F:metal ion binding"/>
    <property type="evidence" value="ECO:0007669"/>
    <property type="project" value="UniProtKB-KW"/>
</dbReference>
<dbReference type="GO" id="GO:0042744">
    <property type="term" value="P:hydrogen peroxide catabolic process"/>
    <property type="evidence" value="ECO:0007669"/>
    <property type="project" value="UniProtKB-KW"/>
</dbReference>
<dbReference type="GO" id="GO:0006979">
    <property type="term" value="P:response to oxidative stress"/>
    <property type="evidence" value="ECO:0007669"/>
    <property type="project" value="InterPro"/>
</dbReference>
<dbReference type="CDD" id="cd00693">
    <property type="entry name" value="secretory_peroxidase"/>
    <property type="match status" value="1"/>
</dbReference>
<dbReference type="FunFam" id="1.10.420.10:FF:000001">
    <property type="entry name" value="Peroxidase"/>
    <property type="match status" value="1"/>
</dbReference>
<dbReference type="FunFam" id="1.10.520.10:FF:000009">
    <property type="entry name" value="Peroxidase"/>
    <property type="match status" value="1"/>
</dbReference>
<dbReference type="Gene3D" id="1.10.520.10">
    <property type="match status" value="1"/>
</dbReference>
<dbReference type="Gene3D" id="1.10.420.10">
    <property type="entry name" value="Peroxidase, domain 2"/>
    <property type="match status" value="1"/>
</dbReference>
<dbReference type="InterPro" id="IPR002016">
    <property type="entry name" value="Haem_peroxidase"/>
</dbReference>
<dbReference type="InterPro" id="IPR010255">
    <property type="entry name" value="Haem_peroxidase_sf"/>
</dbReference>
<dbReference type="InterPro" id="IPR000823">
    <property type="entry name" value="Peroxidase_pln"/>
</dbReference>
<dbReference type="InterPro" id="IPR019794">
    <property type="entry name" value="Peroxidases_AS"/>
</dbReference>
<dbReference type="InterPro" id="IPR019793">
    <property type="entry name" value="Peroxidases_heam-ligand_BS"/>
</dbReference>
<dbReference type="InterPro" id="IPR033905">
    <property type="entry name" value="Secretory_peroxidase"/>
</dbReference>
<dbReference type="PANTHER" id="PTHR31388:SF13">
    <property type="entry name" value="PEROXIDASE 2"/>
    <property type="match status" value="1"/>
</dbReference>
<dbReference type="PANTHER" id="PTHR31388">
    <property type="entry name" value="PEROXIDASE 72-RELATED"/>
    <property type="match status" value="1"/>
</dbReference>
<dbReference type="Pfam" id="PF00141">
    <property type="entry name" value="peroxidase"/>
    <property type="match status" value="1"/>
</dbReference>
<dbReference type="PRINTS" id="PR00458">
    <property type="entry name" value="PEROXIDASE"/>
</dbReference>
<dbReference type="PRINTS" id="PR00461">
    <property type="entry name" value="PLPEROXIDASE"/>
</dbReference>
<dbReference type="SUPFAM" id="SSF48113">
    <property type="entry name" value="Heme-dependent peroxidases"/>
    <property type="match status" value="1"/>
</dbReference>
<dbReference type="PROSITE" id="PS00435">
    <property type="entry name" value="PEROXIDASE_1"/>
    <property type="match status" value="1"/>
</dbReference>
<dbReference type="PROSITE" id="PS00436">
    <property type="entry name" value="PEROXIDASE_2"/>
    <property type="match status" value="1"/>
</dbReference>
<dbReference type="PROSITE" id="PS50873">
    <property type="entry name" value="PEROXIDASE_4"/>
    <property type="match status" value="1"/>
</dbReference>
<feature type="signal peptide" evidence="1">
    <location>
        <begin position="1"/>
        <end position="25"/>
    </location>
</feature>
<feature type="chain" id="PRO_5013421034" description="Peroxidase 22.3">
    <location>
        <begin position="26"/>
        <end position="317"/>
    </location>
</feature>
<feature type="active site" description="Proton acceptor" evidence="2">
    <location>
        <position position="67"/>
    </location>
</feature>
<feature type="binding site" evidence="2">
    <location>
        <position position="68"/>
    </location>
    <ligand>
        <name>Ca(2+)</name>
        <dbReference type="ChEBI" id="CHEBI:29108"/>
        <label>1</label>
    </ligand>
</feature>
<feature type="binding site" evidence="2">
    <location>
        <position position="71"/>
    </location>
    <ligand>
        <name>Ca(2+)</name>
        <dbReference type="ChEBI" id="CHEBI:29108"/>
        <label>1</label>
    </ligand>
</feature>
<feature type="binding site" evidence="2">
    <location>
        <position position="73"/>
    </location>
    <ligand>
        <name>Ca(2+)</name>
        <dbReference type="ChEBI" id="CHEBI:29108"/>
        <label>1</label>
    </ligand>
</feature>
<feature type="binding site" evidence="2">
    <location>
        <position position="75"/>
    </location>
    <ligand>
        <name>Ca(2+)</name>
        <dbReference type="ChEBI" id="CHEBI:29108"/>
        <label>1</label>
    </ligand>
</feature>
<feature type="binding site" evidence="2">
    <location>
        <position position="77"/>
    </location>
    <ligand>
        <name>Ca(2+)</name>
        <dbReference type="ChEBI" id="CHEBI:29108"/>
        <label>1</label>
    </ligand>
</feature>
<feature type="binding site" evidence="2">
    <location>
        <position position="159"/>
    </location>
    <ligand>
        <name>substrate</name>
    </ligand>
</feature>
<feature type="binding site" description="axial binding residue" evidence="2">
    <location>
        <position position="189"/>
    </location>
    <ligand>
        <name>heme b</name>
        <dbReference type="ChEBI" id="CHEBI:60344"/>
    </ligand>
    <ligandPart>
        <name>Fe</name>
        <dbReference type="ChEBI" id="CHEBI:18248"/>
    </ligandPart>
</feature>
<feature type="binding site" evidence="2">
    <location>
        <position position="190"/>
    </location>
    <ligand>
        <name>Ca(2+)</name>
        <dbReference type="ChEBI" id="CHEBI:29108"/>
        <label>2</label>
    </ligand>
</feature>
<feature type="binding site" evidence="2">
    <location>
        <position position="236"/>
    </location>
    <ligand>
        <name>Ca(2+)</name>
        <dbReference type="ChEBI" id="CHEBI:29108"/>
        <label>2</label>
    </ligand>
</feature>
<feature type="binding site" evidence="2">
    <location>
        <position position="239"/>
    </location>
    <ligand>
        <name>Ca(2+)</name>
        <dbReference type="ChEBI" id="CHEBI:29108"/>
        <label>2</label>
    </ligand>
</feature>
<feature type="binding site" evidence="2">
    <location>
        <position position="244"/>
    </location>
    <ligand>
        <name>Ca(2+)</name>
        <dbReference type="ChEBI" id="CHEBI:29108"/>
        <label>2</label>
    </ligand>
</feature>
<feature type="site" description="Transition state stabilizer" evidence="2">
    <location>
        <position position="63"/>
    </location>
</feature>
<feature type="modified residue" description="Pyrrolidone carboxylic acid" evidence="2">
    <location>
        <position position="26"/>
    </location>
</feature>
<feature type="glycosylation site" description="N-linked (GlcNAc...) asparagine" evidence="3">
    <location>
        <position position="112"/>
    </location>
</feature>
<feature type="glycosylation site" description="N-linked (GlcNAc...) asparagine" evidence="3">
    <location>
        <position position="171"/>
    </location>
</feature>
<feature type="glycosylation site" description="N-linked (GlcNAc...) asparagine" evidence="3">
    <location>
        <position position="205"/>
    </location>
</feature>
<feature type="disulfide bond" evidence="2">
    <location>
        <begin position="36"/>
        <end position="111"/>
    </location>
</feature>
<feature type="disulfide bond" evidence="2">
    <location>
        <begin position="69"/>
        <end position="74"/>
    </location>
</feature>
<feature type="disulfide bond" evidence="2">
    <location>
        <begin position="117"/>
        <end position="312"/>
    </location>
</feature>
<feature type="disulfide bond" evidence="2">
    <location>
        <begin position="196"/>
        <end position="221"/>
    </location>
</feature>
<feature type="sequence conflict" description="In Ref. 2; AAC49818." evidence="6" ref="2">
    <original>P</original>
    <variation>A</variation>
    <location>
        <position position="234"/>
    </location>
</feature>
<feature type="sequence conflict" description="In Ref. 1; CAA46916." evidence="6" ref="1">
    <original>L</original>
    <variation>V</variation>
    <location>
        <position position="235"/>
    </location>
</feature>